<sequence>MDTDLYDEFGNYIGPELDSDEDDDELGRETKDLDEDEDEDEDDVGEHEDDHPGMEVVLHEDKKYYPTAEEVYGPEVETIVQEEDTQPLTEPIIKPVKTKKFTLMEQTLPVTVYEMDFLADLMDNSELIRNVTLCGHLHHGKTCFVDCLIEQTHPEIRKRYDQDLCYTDILFTEQERGVGIKSTPVTVVLPDTKGKSYLFNIMDTPGHVNFSDEVTAGLRISDGVVLFIDAAEGVMLNTERLIKHAVQERLAVTVCINKIDRLILELKLPPTDAYYKLRHIVDEVNGLISMYSTDENLILSPLLGNVCFSSSQYSICFTLGSFAKIYADTFGDINYQEFAKRLWGDIYFNPKTRKFTKKAPSSSSQRSFVEFILEPLYKILAQVVGDVDTSLPRTLDELGIHLTKEELKLNIRPLLRLVCKKFFGEFTGFVDMCVQHIPSPKVGAKPKIEHTYTGGVDSDLGEAMSDCDPDGPLMCHTTKMYSTDDGVQFHAFGRVLSGTIHAGQPVKVLGENYTLEDEEDSQICTVGRLWISVARYHIEVNRVPAGNWVLIEGVDQPIVKTATITEPRGNEEAQIFRPLKFNTTSVIKIAVEPVNPSELPKMLDGLRKVNKSYPSLTTKVEESGEHVILGTGELYLDCVMHDLRKMYSEIDIKVADPVVTFCETVVETSSLKCFAETPNKKNKITMIAEPLEKGLAEDIENEVVQITWNRKKLGEFFQTKYDWDLLAARSIWAFGPDATGPNILVDDTLPSEVDKALLGSVKDSIVQGFQWGTREGPLCDELIRNVKFKILDAVVAQEPLHRGGGQIIPTARRVVYSAFLMATPRLMEPYYFVEVQAPADCVSAVYTVLARRRGHVTQDAPIPGSPLYTIKAFIPAIDSFGFETDLRTHTQGQAFSLSVFHHWQIVPGDPLDKSIVIRPLEPQPAPHLAREFMIKTRRRKGLSEDVSISKFFDDPMLLELAKQDVVLNYPM</sequence>
<comment type="function">
    <text evidence="1">Required for pre-mRNA splicing as component of the spliceosome, including pre-catalytic, catalytic and post-catalytic spliceosomal complexes (By similarity). Component of the U5 snRNP and the U4/U6-U5 tri-snRNP complex, a building block of the spliceosome (By similarity). As a component of the minor spliceosome, involved in the splicing of U12-type introns in pre-mRNAs (By similarity).</text>
</comment>
<comment type="subunit">
    <text evidence="1">Component of the U5 snRNP and the U4/U6-U5 tri-snRNP complex, a building block of the spliceosome (By similarity). The U4/U6-U5 tri-snRNP complex is composed of the U4, U6 and U5 snRNAs and at least PRPF3, PRPF4, PRPF6, PRPF8, PRPF31, SNRNP200, TXNL4A, SNRNP40, DDX23, CD2BP2, PPIH, SNU13, EFTUD2, SART1 and USP39 (By similarity). Component of the pre-catalytic, catalytic and post-catalytic spliceosome complexes (By similarity). Component of the minor spliceosome, which splices U12-type introns. Within this complex, interacts with CRIPT (By similarity). Interacts with ERBB4 and PRPF8 (By similarity). Interacts with PIH1D1 (By similarity). Interacts with RPAP3 and URI1 in a ZNHIT2-dependent manner (By similarity). Interacts with NRDE2 (By similarity). Interacts with FAM50A (By similarity). Interacts with UBL5 (By similarity).</text>
</comment>
<comment type="subcellular location">
    <subcellularLocation>
        <location evidence="1">Nucleus</location>
    </subcellularLocation>
</comment>
<comment type="similarity">
    <text evidence="3">Belongs to the TRAFAC class translation factor GTPase superfamily. Classic translation factor GTPase family. EF-G/EF-2 subfamily.</text>
</comment>
<comment type="sequence caution" evidence="5">
    <conflict type="miscellaneous discrepancy">
        <sequence resource="EMBL-CDS" id="AAH12636"/>
    </conflict>
    <text>Contaminating sequence. Vector contamination at the N-terminus.</text>
</comment>
<gene>
    <name type="primary">Eftud2</name>
    <name type="synonym">Snrp116</name>
</gene>
<dbReference type="EMBL" id="U97079">
    <property type="protein sequence ID" value="AAC53299.1"/>
    <property type="molecule type" value="mRNA"/>
</dbReference>
<dbReference type="EMBL" id="BC012636">
    <property type="protein sequence ID" value="AAH12636.1"/>
    <property type="status" value="ALT_INIT"/>
    <property type="molecule type" value="mRNA"/>
</dbReference>
<dbReference type="EMBL" id="BC054778">
    <property type="protein sequence ID" value="AAH54778.1"/>
    <property type="molecule type" value="mRNA"/>
</dbReference>
<dbReference type="CCDS" id="CCDS48947.1"/>
<dbReference type="RefSeq" id="NP_001103465.1">
    <property type="nucleotide sequence ID" value="NM_001109995.1"/>
</dbReference>
<dbReference type="RefSeq" id="NP_035561.1">
    <property type="nucleotide sequence ID" value="NM_011431.3"/>
</dbReference>
<dbReference type="SMR" id="O08810"/>
<dbReference type="BioGRID" id="203372">
    <property type="interactions" value="66"/>
</dbReference>
<dbReference type="FunCoup" id="O08810">
    <property type="interactions" value="5054"/>
</dbReference>
<dbReference type="IntAct" id="O08810">
    <property type="interactions" value="6"/>
</dbReference>
<dbReference type="MINT" id="O08810"/>
<dbReference type="STRING" id="10090.ENSMUSP00000021306"/>
<dbReference type="GlyGen" id="O08810">
    <property type="glycosylation" value="2 sites, 1 N-linked glycan (1 site), 1 O-linked glycan (1 site)"/>
</dbReference>
<dbReference type="iPTMnet" id="O08810"/>
<dbReference type="PhosphoSitePlus" id="O08810"/>
<dbReference type="SwissPalm" id="O08810"/>
<dbReference type="jPOST" id="O08810"/>
<dbReference type="PaxDb" id="10090-ENSMUSP00000021306"/>
<dbReference type="PeptideAtlas" id="O08810"/>
<dbReference type="ProteomicsDB" id="298344"/>
<dbReference type="Pumba" id="O08810"/>
<dbReference type="Antibodypedia" id="17535">
    <property type="antibodies" value="246 antibodies from 30 providers"/>
</dbReference>
<dbReference type="DNASU" id="20624"/>
<dbReference type="Ensembl" id="ENSMUST00000107060.8">
    <property type="protein sequence ID" value="ENSMUSP00000102675.2"/>
    <property type="gene ID" value="ENSMUSG00000020929.15"/>
</dbReference>
<dbReference type="GeneID" id="20624"/>
<dbReference type="KEGG" id="mmu:20624"/>
<dbReference type="UCSC" id="uc033gal.1">
    <property type="organism name" value="mouse"/>
</dbReference>
<dbReference type="AGR" id="MGI:1336880"/>
<dbReference type="CTD" id="9343"/>
<dbReference type="MGI" id="MGI:1336880">
    <property type="gene designation" value="Eftud2"/>
</dbReference>
<dbReference type="VEuPathDB" id="HostDB:ENSMUSG00000020929"/>
<dbReference type="eggNOG" id="KOG0468">
    <property type="taxonomic scope" value="Eukaryota"/>
</dbReference>
<dbReference type="GeneTree" id="ENSGT00940000155685"/>
<dbReference type="InParanoid" id="O08810"/>
<dbReference type="OrthoDB" id="364892at2759"/>
<dbReference type="Reactome" id="R-MMU-72163">
    <property type="pathway name" value="mRNA Splicing - Major Pathway"/>
</dbReference>
<dbReference type="Reactome" id="R-MMU-72165">
    <property type="pathway name" value="mRNA Splicing - Minor Pathway"/>
</dbReference>
<dbReference type="BioGRID-ORCS" id="20624">
    <property type="hits" value="28 hits in 78 CRISPR screens"/>
</dbReference>
<dbReference type="ChiTaRS" id="Eftud2">
    <property type="organism name" value="mouse"/>
</dbReference>
<dbReference type="PRO" id="PR:O08810"/>
<dbReference type="Proteomes" id="UP000000589">
    <property type="component" value="Chromosome 11"/>
</dbReference>
<dbReference type="RNAct" id="O08810">
    <property type="molecule type" value="protein"/>
</dbReference>
<dbReference type="Bgee" id="ENSMUSG00000020929">
    <property type="expression patterns" value="Expressed in maxillary prominence and 280 other cell types or tissues"/>
</dbReference>
<dbReference type="ExpressionAtlas" id="O08810">
    <property type="expression patterns" value="baseline and differential"/>
</dbReference>
<dbReference type="GO" id="GO:0005634">
    <property type="term" value="C:nucleus"/>
    <property type="evidence" value="ECO:0000314"/>
    <property type="project" value="MGI"/>
</dbReference>
<dbReference type="GO" id="GO:0071007">
    <property type="term" value="C:U2-type catalytic step 2 spliceosome"/>
    <property type="evidence" value="ECO:0000250"/>
    <property type="project" value="UniProtKB"/>
</dbReference>
<dbReference type="GO" id="GO:0071005">
    <property type="term" value="C:U2-type precatalytic spliceosome"/>
    <property type="evidence" value="ECO:0000250"/>
    <property type="project" value="UniProtKB"/>
</dbReference>
<dbReference type="GO" id="GO:0005525">
    <property type="term" value="F:GTP binding"/>
    <property type="evidence" value="ECO:0007669"/>
    <property type="project" value="UniProtKB-KW"/>
</dbReference>
<dbReference type="GO" id="GO:0003924">
    <property type="term" value="F:GTPase activity"/>
    <property type="evidence" value="ECO:0007669"/>
    <property type="project" value="InterPro"/>
</dbReference>
<dbReference type="GO" id="GO:0000398">
    <property type="term" value="P:mRNA splicing, via spliceosome"/>
    <property type="evidence" value="ECO:0000250"/>
    <property type="project" value="UniProtKB"/>
</dbReference>
<dbReference type="CDD" id="cd04098">
    <property type="entry name" value="eEF2_C_snRNP"/>
    <property type="match status" value="1"/>
</dbReference>
<dbReference type="CDD" id="cd04090">
    <property type="entry name" value="EF2_II_snRNP"/>
    <property type="match status" value="1"/>
</dbReference>
<dbReference type="CDD" id="cd01683">
    <property type="entry name" value="EF2_IV_snRNP"/>
    <property type="match status" value="1"/>
</dbReference>
<dbReference type="CDD" id="cd16264">
    <property type="entry name" value="snRNP_III"/>
    <property type="match status" value="1"/>
</dbReference>
<dbReference type="CDD" id="cd04167">
    <property type="entry name" value="Snu114p"/>
    <property type="match status" value="1"/>
</dbReference>
<dbReference type="FunFam" id="3.30.70.240:FF:000004">
    <property type="entry name" value="116 kDa U5 small nuclear ribonucleoprotein"/>
    <property type="match status" value="1"/>
</dbReference>
<dbReference type="FunFam" id="2.40.30.10:FF:000029">
    <property type="entry name" value="116 kDa U5 small nuclear ribonucleoprotein component"/>
    <property type="match status" value="1"/>
</dbReference>
<dbReference type="FunFam" id="3.30.230.10:FF:000009">
    <property type="entry name" value="116 kDa U5 small nuclear ribonucleoprotein component"/>
    <property type="match status" value="1"/>
</dbReference>
<dbReference type="FunFam" id="3.40.50.300:FF:000574">
    <property type="entry name" value="116 kDa U5 small nuclear ribonucleoprotein component"/>
    <property type="match status" value="1"/>
</dbReference>
<dbReference type="FunFam" id="3.90.1430.10:FF:000001">
    <property type="entry name" value="116 kDa U5 small nuclear ribonucleoprotein component"/>
    <property type="match status" value="1"/>
</dbReference>
<dbReference type="FunFam" id="3.30.70.870:FF:000002">
    <property type="entry name" value="Translation elongation factor 2"/>
    <property type="match status" value="1"/>
</dbReference>
<dbReference type="Gene3D" id="3.30.230.10">
    <property type="match status" value="1"/>
</dbReference>
<dbReference type="Gene3D" id="3.30.70.240">
    <property type="match status" value="1"/>
</dbReference>
<dbReference type="Gene3D" id="3.30.70.870">
    <property type="entry name" value="Elongation Factor G (Translational Gtpase), domain 3"/>
    <property type="match status" value="1"/>
</dbReference>
<dbReference type="Gene3D" id="3.40.50.300">
    <property type="entry name" value="P-loop containing nucleotide triphosphate hydrolases"/>
    <property type="match status" value="1"/>
</dbReference>
<dbReference type="Gene3D" id="2.40.30.10">
    <property type="entry name" value="Translation factors"/>
    <property type="match status" value="1"/>
</dbReference>
<dbReference type="Gene3D" id="3.90.1430.10">
    <property type="entry name" value="Yeast translation eEF2 (G' domain)"/>
    <property type="match status" value="1"/>
</dbReference>
<dbReference type="InterPro" id="IPR041095">
    <property type="entry name" value="EFG_II"/>
</dbReference>
<dbReference type="InterPro" id="IPR035647">
    <property type="entry name" value="EFG_III/V"/>
</dbReference>
<dbReference type="InterPro" id="IPR000640">
    <property type="entry name" value="EFG_V-like"/>
</dbReference>
<dbReference type="InterPro" id="IPR004161">
    <property type="entry name" value="EFTu-like_2"/>
</dbReference>
<dbReference type="InterPro" id="IPR031950">
    <property type="entry name" value="EFTUD2_N"/>
</dbReference>
<dbReference type="InterPro" id="IPR027417">
    <property type="entry name" value="P-loop_NTPase"/>
</dbReference>
<dbReference type="InterPro" id="IPR020568">
    <property type="entry name" value="Ribosomal_Su5_D2-typ_SF"/>
</dbReference>
<dbReference type="InterPro" id="IPR014721">
    <property type="entry name" value="Ribsml_uS5_D2-typ_fold_subgr"/>
</dbReference>
<dbReference type="InterPro" id="IPR005225">
    <property type="entry name" value="Small_GTP-bd"/>
</dbReference>
<dbReference type="InterPro" id="IPR044121">
    <property type="entry name" value="Snu114_GTP-bd"/>
</dbReference>
<dbReference type="InterPro" id="IPR000795">
    <property type="entry name" value="T_Tr_GTP-bd_dom"/>
</dbReference>
<dbReference type="InterPro" id="IPR009000">
    <property type="entry name" value="Transl_B-barrel_sf"/>
</dbReference>
<dbReference type="InterPro" id="IPR005517">
    <property type="entry name" value="Transl_elong_EFG/EF2_IV"/>
</dbReference>
<dbReference type="InterPro" id="IPR035655">
    <property type="entry name" value="U5-116kDa_C"/>
</dbReference>
<dbReference type="NCBIfam" id="TIGR00231">
    <property type="entry name" value="small_GTP"/>
    <property type="match status" value="1"/>
</dbReference>
<dbReference type="PANTHER" id="PTHR42908:SF6">
    <property type="entry name" value="116 KDA U5 SMALL NUCLEAR RIBONUCLEOPROTEIN COMPONENT"/>
    <property type="match status" value="1"/>
</dbReference>
<dbReference type="PANTHER" id="PTHR42908">
    <property type="entry name" value="TRANSLATION ELONGATION FACTOR-RELATED"/>
    <property type="match status" value="1"/>
</dbReference>
<dbReference type="Pfam" id="PF00679">
    <property type="entry name" value="EFG_C"/>
    <property type="match status" value="1"/>
</dbReference>
<dbReference type="Pfam" id="PF14492">
    <property type="entry name" value="EFG_III"/>
    <property type="match status" value="1"/>
</dbReference>
<dbReference type="Pfam" id="PF03764">
    <property type="entry name" value="EFG_IV"/>
    <property type="match status" value="1"/>
</dbReference>
<dbReference type="Pfam" id="PF16004">
    <property type="entry name" value="EFTUD2"/>
    <property type="match status" value="1"/>
</dbReference>
<dbReference type="Pfam" id="PF00009">
    <property type="entry name" value="GTP_EFTU"/>
    <property type="match status" value="1"/>
</dbReference>
<dbReference type="Pfam" id="PF03144">
    <property type="entry name" value="GTP_EFTU_D2"/>
    <property type="match status" value="1"/>
</dbReference>
<dbReference type="PRINTS" id="PR00315">
    <property type="entry name" value="ELONGATNFCT"/>
</dbReference>
<dbReference type="SMART" id="SM00838">
    <property type="entry name" value="EFG_C"/>
    <property type="match status" value="1"/>
</dbReference>
<dbReference type="SMART" id="SM00889">
    <property type="entry name" value="EFG_IV"/>
    <property type="match status" value="1"/>
</dbReference>
<dbReference type="SUPFAM" id="SSF54980">
    <property type="entry name" value="EF-G C-terminal domain-like"/>
    <property type="match status" value="2"/>
</dbReference>
<dbReference type="SUPFAM" id="SSF52540">
    <property type="entry name" value="P-loop containing nucleoside triphosphate hydrolases"/>
    <property type="match status" value="1"/>
</dbReference>
<dbReference type="SUPFAM" id="SSF54211">
    <property type="entry name" value="Ribosomal protein S5 domain 2-like"/>
    <property type="match status" value="1"/>
</dbReference>
<dbReference type="SUPFAM" id="SSF50447">
    <property type="entry name" value="Translation proteins"/>
    <property type="match status" value="1"/>
</dbReference>
<dbReference type="PROSITE" id="PS51722">
    <property type="entry name" value="G_TR_2"/>
    <property type="match status" value="1"/>
</dbReference>
<reference key="1">
    <citation type="journal article" date="1997" name="EMBO J.">
        <title>An evolutionarily conserved U5 snRNP-specific protein is a GTP-binding factor closely related to the ribosomal translocase EF-2.</title>
        <authorList>
            <person name="Fabrizio P."/>
            <person name="Laggerbauer B."/>
            <person name="Lauber J."/>
            <person name="Lane W.S."/>
            <person name="Luehrmann R."/>
        </authorList>
    </citation>
    <scope>NUCLEOTIDE SEQUENCE [MRNA]</scope>
</reference>
<reference key="2">
    <citation type="journal article" date="2004" name="Genome Res.">
        <title>The status, quality, and expansion of the NIH full-length cDNA project: the Mammalian Gene Collection (MGC).</title>
        <authorList>
            <consortium name="The MGC Project Team"/>
        </authorList>
    </citation>
    <scope>NUCLEOTIDE SEQUENCE [LARGE SCALE MRNA]</scope>
    <source>
        <strain>C57BL/6J</strain>
        <strain>FVB/N</strain>
        <tissue>Brain</tissue>
        <tissue>Mammary gland</tissue>
    </source>
</reference>
<reference key="3">
    <citation type="journal article" date="2010" name="Cell">
        <title>A tissue-specific atlas of mouse protein phosphorylation and expression.</title>
        <authorList>
            <person name="Huttlin E.L."/>
            <person name="Jedrychowski M.P."/>
            <person name="Elias J.E."/>
            <person name="Goswami T."/>
            <person name="Rad R."/>
            <person name="Beausoleil S.A."/>
            <person name="Villen J."/>
            <person name="Haas W."/>
            <person name="Sowa M.E."/>
            <person name="Gygi S.P."/>
        </authorList>
    </citation>
    <scope>IDENTIFICATION BY MASS SPECTROMETRY [LARGE SCALE ANALYSIS]</scope>
    <source>
        <tissue>Brain</tissue>
        <tissue>Brown adipose tissue</tissue>
        <tissue>Heart</tissue>
        <tissue>Kidney</tissue>
        <tissue>Liver</tissue>
        <tissue>Lung</tissue>
        <tissue>Pancreas</tissue>
        <tissue>Spleen</tissue>
        <tissue>Testis</tissue>
    </source>
</reference>
<protein>
    <recommendedName>
        <fullName>116 kDa U5 small nuclear ribonucleoprotein component</fullName>
    </recommendedName>
    <alternativeName>
        <fullName>Elongation factor Tu GTP-binding domain-containing protein 2</fullName>
    </alternativeName>
    <alternativeName>
        <fullName>U5 snRNP-specific protein, 116 kDa</fullName>
        <shortName>U5-116 kDa</shortName>
    </alternativeName>
</protein>
<evidence type="ECO:0000250" key="1">
    <source>
        <dbReference type="UniProtKB" id="Q15029"/>
    </source>
</evidence>
<evidence type="ECO:0000255" key="2"/>
<evidence type="ECO:0000255" key="3">
    <source>
        <dbReference type="PROSITE-ProRule" id="PRU01059"/>
    </source>
</evidence>
<evidence type="ECO:0000256" key="4">
    <source>
        <dbReference type="SAM" id="MobiDB-lite"/>
    </source>
</evidence>
<evidence type="ECO:0000305" key="5"/>
<keyword id="KW-0007">Acetylation</keyword>
<keyword id="KW-0342">GTP-binding</keyword>
<keyword id="KW-1017">Isopeptide bond</keyword>
<keyword id="KW-0507">mRNA processing</keyword>
<keyword id="KW-0508">mRNA splicing</keyword>
<keyword id="KW-0547">Nucleotide-binding</keyword>
<keyword id="KW-0539">Nucleus</keyword>
<keyword id="KW-0597">Phosphoprotein</keyword>
<keyword id="KW-1185">Reference proteome</keyword>
<keyword id="KW-0747">Spliceosome</keyword>
<keyword id="KW-0832">Ubl conjugation</keyword>
<name>U5S1_MOUSE</name>
<accession>O08810</accession>
<feature type="chain" id="PRO_0000091564" description="116 kDa U5 small nuclear ribonucleoprotein component">
    <location>
        <begin position="1"/>
        <end position="971"/>
    </location>
</feature>
<feature type="domain" description="tr-type G" evidence="3">
    <location>
        <begin position="126"/>
        <end position="408"/>
    </location>
</feature>
<feature type="region of interest" description="Disordered" evidence="4">
    <location>
        <begin position="1"/>
        <end position="52"/>
    </location>
</feature>
<feature type="compositionally biased region" description="Acidic residues" evidence="4">
    <location>
        <begin position="17"/>
        <end position="47"/>
    </location>
</feature>
<feature type="binding site" evidence="2">
    <location>
        <begin position="135"/>
        <end position="142"/>
    </location>
    <ligand>
        <name>GTP</name>
        <dbReference type="ChEBI" id="CHEBI:37565"/>
    </ligand>
</feature>
<feature type="binding site" evidence="2">
    <location>
        <begin position="203"/>
        <end position="207"/>
    </location>
    <ligand>
        <name>GTP</name>
        <dbReference type="ChEBI" id="CHEBI:37565"/>
    </ligand>
</feature>
<feature type="binding site" evidence="2">
    <location>
        <begin position="257"/>
        <end position="260"/>
    </location>
    <ligand>
        <name>GTP</name>
        <dbReference type="ChEBI" id="CHEBI:37565"/>
    </ligand>
</feature>
<feature type="modified residue" description="N-acetylmethionine" evidence="1">
    <location>
        <position position="1"/>
    </location>
</feature>
<feature type="modified residue" description="Phosphoserine" evidence="1">
    <location>
        <position position="19"/>
    </location>
</feature>
<feature type="modified residue" description="Phosphothreonine" evidence="1">
    <location>
        <position position="85"/>
    </location>
</feature>
<feature type="cross-link" description="Glycyl lysine isopeptide (Lys-Gly) (interchain with G-Cter in SUMO1); alternate" evidence="1">
    <location>
        <position position="63"/>
    </location>
</feature>
<feature type="cross-link" description="Glycyl lysine isopeptide (Lys-Gly) (interchain with G-Cter in SUMO2); alternate" evidence="1">
    <location>
        <position position="63"/>
    </location>
</feature>
<proteinExistence type="evidence at protein level"/>
<organism>
    <name type="scientific">Mus musculus</name>
    <name type="common">Mouse</name>
    <dbReference type="NCBI Taxonomy" id="10090"/>
    <lineage>
        <taxon>Eukaryota</taxon>
        <taxon>Metazoa</taxon>
        <taxon>Chordata</taxon>
        <taxon>Craniata</taxon>
        <taxon>Vertebrata</taxon>
        <taxon>Euteleostomi</taxon>
        <taxon>Mammalia</taxon>
        <taxon>Eutheria</taxon>
        <taxon>Euarchontoglires</taxon>
        <taxon>Glires</taxon>
        <taxon>Rodentia</taxon>
        <taxon>Myomorpha</taxon>
        <taxon>Muroidea</taxon>
        <taxon>Muridae</taxon>
        <taxon>Murinae</taxon>
        <taxon>Mus</taxon>
        <taxon>Mus</taxon>
    </lineage>
</organism>